<organism>
    <name type="scientific">Mycolicibacterium paratuberculosis (strain ATCC BAA-968 / K-10)</name>
    <name type="common">Mycobacterium paratuberculosis</name>
    <dbReference type="NCBI Taxonomy" id="262316"/>
    <lineage>
        <taxon>Bacteria</taxon>
        <taxon>Bacillati</taxon>
        <taxon>Actinomycetota</taxon>
        <taxon>Actinomycetes</taxon>
        <taxon>Mycobacteriales</taxon>
        <taxon>Mycobacteriaceae</taxon>
        <taxon>Mycobacterium</taxon>
        <taxon>Mycobacterium avium complex (MAC)</taxon>
    </lineage>
</organism>
<protein>
    <recommendedName>
        <fullName>Alpha-keto-acid decarboxylase</fullName>
        <shortName>KDC</shortName>
        <ecNumber>4.1.1.-</ecNumber>
    </recommendedName>
</protein>
<name>KDC_MYCPA</name>
<reference key="1">
    <citation type="journal article" date="2005" name="Proc. Natl. Acad. Sci. U.S.A.">
        <title>The complete genome sequence of Mycobacterium avium subspecies paratuberculosis.</title>
        <authorList>
            <person name="Li L."/>
            <person name="Bannantine J.P."/>
            <person name="Zhang Q."/>
            <person name="Amonsin A."/>
            <person name="May B.J."/>
            <person name="Alt D."/>
            <person name="Banerji N."/>
            <person name="Kanjilal S."/>
            <person name="Kapur V."/>
        </authorList>
    </citation>
    <scope>NUCLEOTIDE SEQUENCE [LARGE SCALE GENOMIC DNA]</scope>
    <source>
        <strain>ATCC BAA-968 / K-10</strain>
    </source>
</reference>
<proteinExistence type="inferred from homology"/>
<dbReference type="EC" id="4.1.1.-"/>
<dbReference type="EMBL" id="AE016958">
    <property type="protein sequence ID" value="AAS03100.1"/>
    <property type="molecule type" value="Genomic_DNA"/>
</dbReference>
<dbReference type="SMR" id="Q742Q2"/>
<dbReference type="STRING" id="262316.MAP_0783c"/>
<dbReference type="KEGG" id="mpa:MAP_0783c"/>
<dbReference type="eggNOG" id="COG3961">
    <property type="taxonomic scope" value="Bacteria"/>
</dbReference>
<dbReference type="HOGENOM" id="CLU_013748_0_2_11"/>
<dbReference type="Proteomes" id="UP000000580">
    <property type="component" value="Chromosome"/>
</dbReference>
<dbReference type="GO" id="GO:0005829">
    <property type="term" value="C:cytosol"/>
    <property type="evidence" value="ECO:0007669"/>
    <property type="project" value="TreeGrafter"/>
</dbReference>
<dbReference type="GO" id="GO:0000287">
    <property type="term" value="F:magnesium ion binding"/>
    <property type="evidence" value="ECO:0007669"/>
    <property type="project" value="InterPro"/>
</dbReference>
<dbReference type="GO" id="GO:0004737">
    <property type="term" value="F:pyruvate decarboxylase activity"/>
    <property type="evidence" value="ECO:0007669"/>
    <property type="project" value="TreeGrafter"/>
</dbReference>
<dbReference type="GO" id="GO:0030976">
    <property type="term" value="F:thiamine pyrophosphate binding"/>
    <property type="evidence" value="ECO:0007669"/>
    <property type="project" value="InterPro"/>
</dbReference>
<dbReference type="GO" id="GO:0000949">
    <property type="term" value="P:aromatic amino acid family catabolic process to alcohol via Ehrlich pathway"/>
    <property type="evidence" value="ECO:0007669"/>
    <property type="project" value="TreeGrafter"/>
</dbReference>
<dbReference type="CDD" id="cd02005">
    <property type="entry name" value="TPP_PDC_IPDC"/>
    <property type="match status" value="1"/>
</dbReference>
<dbReference type="CDD" id="cd07038">
    <property type="entry name" value="TPP_PYR_PDC_IPDC_like"/>
    <property type="match status" value="1"/>
</dbReference>
<dbReference type="FunFam" id="3.40.50.970:FF:000019">
    <property type="entry name" value="Pyruvate decarboxylase isozyme"/>
    <property type="match status" value="1"/>
</dbReference>
<dbReference type="FunFam" id="3.40.50.970:FF:000024">
    <property type="entry name" value="Pyruvate decarboxylase isozyme"/>
    <property type="match status" value="1"/>
</dbReference>
<dbReference type="Gene3D" id="3.40.50.970">
    <property type="match status" value="2"/>
</dbReference>
<dbReference type="Gene3D" id="3.40.50.1220">
    <property type="entry name" value="TPP-binding domain"/>
    <property type="match status" value="1"/>
</dbReference>
<dbReference type="InterPro" id="IPR029035">
    <property type="entry name" value="DHS-like_NAD/FAD-binding_dom"/>
</dbReference>
<dbReference type="InterPro" id="IPR012110">
    <property type="entry name" value="PDC/IPDC-like"/>
</dbReference>
<dbReference type="InterPro" id="IPR029061">
    <property type="entry name" value="THDP-binding"/>
</dbReference>
<dbReference type="InterPro" id="IPR012000">
    <property type="entry name" value="Thiamin_PyroP_enz_cen_dom"/>
</dbReference>
<dbReference type="InterPro" id="IPR012001">
    <property type="entry name" value="Thiamin_PyroP_enz_TPP-bd_dom"/>
</dbReference>
<dbReference type="InterPro" id="IPR000399">
    <property type="entry name" value="TPP-bd_CS"/>
</dbReference>
<dbReference type="InterPro" id="IPR011766">
    <property type="entry name" value="TPP_enzyme_TPP-bd"/>
</dbReference>
<dbReference type="InterPro" id="IPR047214">
    <property type="entry name" value="TPP_PDC_IPDC"/>
</dbReference>
<dbReference type="InterPro" id="IPR047213">
    <property type="entry name" value="TPP_PYR_PDC_IPDC-like"/>
</dbReference>
<dbReference type="PANTHER" id="PTHR43452">
    <property type="entry name" value="PYRUVATE DECARBOXYLASE"/>
    <property type="match status" value="1"/>
</dbReference>
<dbReference type="PANTHER" id="PTHR43452:SF30">
    <property type="entry name" value="PYRUVATE DECARBOXYLASE ISOZYME 1-RELATED"/>
    <property type="match status" value="1"/>
</dbReference>
<dbReference type="Pfam" id="PF02775">
    <property type="entry name" value="TPP_enzyme_C"/>
    <property type="match status" value="1"/>
</dbReference>
<dbReference type="Pfam" id="PF00205">
    <property type="entry name" value="TPP_enzyme_M"/>
    <property type="match status" value="1"/>
</dbReference>
<dbReference type="Pfam" id="PF02776">
    <property type="entry name" value="TPP_enzyme_N"/>
    <property type="match status" value="1"/>
</dbReference>
<dbReference type="PIRSF" id="PIRSF036565">
    <property type="entry name" value="Pyruvt_ip_decrb"/>
    <property type="match status" value="1"/>
</dbReference>
<dbReference type="SUPFAM" id="SSF52467">
    <property type="entry name" value="DHS-like NAD/FAD-binding domain"/>
    <property type="match status" value="1"/>
</dbReference>
<dbReference type="SUPFAM" id="SSF52518">
    <property type="entry name" value="Thiamin diphosphate-binding fold (THDP-binding)"/>
    <property type="match status" value="2"/>
</dbReference>
<dbReference type="PROSITE" id="PS00187">
    <property type="entry name" value="TPP_ENZYMES"/>
    <property type="match status" value="1"/>
</dbReference>
<sequence>MPVTDAATEPAYTVGDYLLDRLAELGVSEIFGVPGDYNLEFLDHIVAHPRLRWVGNANELNAGYAADGYGRLRGMSALVTTFGVGELSAANAVAGSYAEQVPVVHIVGGPSKDAQGTRRALHHSLGDGDFEHFFRVSREITCAQANLMPATARREIDRVLSEVREQKRPGYILLSTDVARFPTEPPEAALPRYTGGTSPRALAMFTEAAAALIGEHRITVLADLLVHRLQAIKELEALLAADVVPHATLMWGKSLLDESSPNFLGIYAGSASAPAVRTAIEEAPVLVTAGVVFTDMVSGFFSQRIDPARTIDVGQYQSSVAGEVFAPLEMGEALQALTAILTRRGVSSPPVASPPAEPLPPPPPREQPLTQKMVWDRVCTALTPGNVVLADQGTSFYGMADHRLPQGVTFIGQPLWGSIGYTLPAALGAAVAHPDRRTVLLIGDGAAQLTVQELGTFAREGLSPVIVVVNNDGYTVERAIHGETAPYNDIVGWKWTEVPNALGVTEHLAFRVQTYGELDDALTAAARHQDRMVLVEVVLPRLEIPRLLVELVRPTSPDGSPRR</sequence>
<comment type="function">
    <text>Decarboxylates branched-chain and aromatic alpha-keto acids to aldehydes.</text>
</comment>
<comment type="cofactor">
    <cofactor evidence="1">
        <name>a metal cation</name>
        <dbReference type="ChEBI" id="CHEBI:25213"/>
    </cofactor>
    <text evidence="1">Binds 1 metal ion per subunit.</text>
</comment>
<comment type="cofactor">
    <cofactor evidence="1">
        <name>thiamine diphosphate</name>
        <dbReference type="ChEBI" id="CHEBI:58937"/>
    </cofactor>
    <text evidence="1">Binds 1 thiamine pyrophosphate per subunit.</text>
</comment>
<comment type="similarity">
    <text evidence="3">Belongs to the TPP enzyme family.</text>
</comment>
<evidence type="ECO:0000250" key="1"/>
<evidence type="ECO:0000256" key="2">
    <source>
        <dbReference type="SAM" id="MobiDB-lite"/>
    </source>
</evidence>
<evidence type="ECO:0000305" key="3"/>
<accession>Q742Q2</accession>
<keyword id="KW-0210">Decarboxylase</keyword>
<keyword id="KW-0456">Lyase</keyword>
<keyword id="KW-0460">Magnesium</keyword>
<keyword id="KW-0479">Metal-binding</keyword>
<keyword id="KW-1185">Reference proteome</keyword>
<keyword id="KW-0786">Thiamine pyrophosphate</keyword>
<gene>
    <name type="primary">kdc</name>
    <name type="ordered locus">MAP_0783c</name>
</gene>
<feature type="chain" id="PRO_0000333749" description="Alpha-keto-acid decarboxylase">
    <location>
        <begin position="1"/>
        <end position="563"/>
    </location>
</feature>
<feature type="region of interest" description="Disordered" evidence="2">
    <location>
        <begin position="347"/>
        <end position="367"/>
    </location>
</feature>
<feature type="region of interest" description="Thiamine pyrophosphate binding" evidence="1">
    <location>
        <begin position="394"/>
        <end position="476"/>
    </location>
</feature>
<feature type="compositionally biased region" description="Pro residues" evidence="2">
    <location>
        <begin position="351"/>
        <end position="366"/>
    </location>
</feature>
<feature type="binding site" evidence="1">
    <location>
        <position position="59"/>
    </location>
    <ligand>
        <name>thiamine diphosphate</name>
        <dbReference type="ChEBI" id="CHEBI:58937"/>
    </ligand>
</feature>
<feature type="binding site" evidence="1">
    <location>
        <position position="444"/>
    </location>
    <ligand>
        <name>Mg(2+)</name>
        <dbReference type="ChEBI" id="CHEBI:18420"/>
    </ligand>
</feature>
<feature type="binding site" evidence="1">
    <location>
        <position position="471"/>
    </location>
    <ligand>
        <name>Mg(2+)</name>
        <dbReference type="ChEBI" id="CHEBI:18420"/>
    </ligand>
</feature>
<feature type="binding site" evidence="1">
    <location>
        <position position="473"/>
    </location>
    <ligand>
        <name>Mg(2+)</name>
        <dbReference type="ChEBI" id="CHEBI:18420"/>
    </ligand>
</feature>